<reference key="1">
    <citation type="submission" date="2006-08" db="EMBL/GenBank/DDBJ databases">
        <title>Complete sequence of Maricaulis maris MCS10.</title>
        <authorList>
            <consortium name="US DOE Joint Genome Institute"/>
            <person name="Copeland A."/>
            <person name="Lucas S."/>
            <person name="Lapidus A."/>
            <person name="Barry K."/>
            <person name="Detter J.C."/>
            <person name="Glavina del Rio T."/>
            <person name="Hammon N."/>
            <person name="Israni S."/>
            <person name="Dalin E."/>
            <person name="Tice H."/>
            <person name="Pitluck S."/>
            <person name="Saunders E."/>
            <person name="Brettin T."/>
            <person name="Bruce D."/>
            <person name="Han C."/>
            <person name="Tapia R."/>
            <person name="Gilna P."/>
            <person name="Schmutz J."/>
            <person name="Larimer F."/>
            <person name="Land M."/>
            <person name="Hauser L."/>
            <person name="Kyrpides N."/>
            <person name="Mikhailova N."/>
            <person name="Viollier P."/>
            <person name="Stephens C."/>
            <person name="Richardson P."/>
        </authorList>
    </citation>
    <scope>NUCLEOTIDE SEQUENCE [LARGE SCALE GENOMIC DNA]</scope>
    <source>
        <strain>MCS10</strain>
    </source>
</reference>
<sequence length="254" mass="29097">MTHPFATKQIPFFLTASAPCPYLPGRFERKVFTRIDIGEGPALNDALTHAGFRRSQGVLYRPACEACDACKSVRIDAEAFEWKRRWRKIAARNRDLHVSIDAQTATMEQFDLLSRYLDSRHGDGDMAGMSFGEYVMMVEEGAQRTHVTEYRDSDGVLRAAALTDVLKDGLSLIYSYFDPEWERRSPGAYMILDAVRQAELAGLPFVYLGYWVRQSRKMSYKAQYQPLQVLTPSGWQPHAELAYHDMEDEEDDFD</sequence>
<organism>
    <name type="scientific">Maricaulis maris (strain MCS10)</name>
    <name type="common">Caulobacter maris</name>
    <dbReference type="NCBI Taxonomy" id="394221"/>
    <lineage>
        <taxon>Bacteria</taxon>
        <taxon>Pseudomonadati</taxon>
        <taxon>Pseudomonadota</taxon>
        <taxon>Alphaproteobacteria</taxon>
        <taxon>Maricaulales</taxon>
        <taxon>Maricaulaceae</taxon>
        <taxon>Maricaulis</taxon>
    </lineage>
</organism>
<evidence type="ECO:0000255" key="1">
    <source>
        <dbReference type="HAMAP-Rule" id="MF_00689"/>
    </source>
</evidence>
<name>BPT_MARMM</name>
<feature type="chain" id="PRO_0000263191" description="Aspartate/glutamate leucyltransferase">
    <location>
        <begin position="1"/>
        <end position="254"/>
    </location>
</feature>
<accession>Q0APD6</accession>
<gene>
    <name evidence="1" type="primary">bpt</name>
    <name type="ordered locus">Mmar10_1559</name>
</gene>
<dbReference type="EC" id="2.3.2.29" evidence="1"/>
<dbReference type="EMBL" id="CP000449">
    <property type="protein sequence ID" value="ABI65851.1"/>
    <property type="molecule type" value="Genomic_DNA"/>
</dbReference>
<dbReference type="RefSeq" id="WP_011643498.1">
    <property type="nucleotide sequence ID" value="NC_008347.1"/>
</dbReference>
<dbReference type="SMR" id="Q0APD6"/>
<dbReference type="STRING" id="394221.Mmar10_1559"/>
<dbReference type="KEGG" id="mmr:Mmar10_1559"/>
<dbReference type="eggNOG" id="COG2935">
    <property type="taxonomic scope" value="Bacteria"/>
</dbReference>
<dbReference type="HOGENOM" id="CLU_077607_1_0_5"/>
<dbReference type="OrthoDB" id="9782022at2"/>
<dbReference type="Proteomes" id="UP000001964">
    <property type="component" value="Chromosome"/>
</dbReference>
<dbReference type="GO" id="GO:0005737">
    <property type="term" value="C:cytoplasm"/>
    <property type="evidence" value="ECO:0007669"/>
    <property type="project" value="UniProtKB-SubCell"/>
</dbReference>
<dbReference type="GO" id="GO:0004057">
    <property type="term" value="F:arginyl-tRNA--protein transferase activity"/>
    <property type="evidence" value="ECO:0007669"/>
    <property type="project" value="InterPro"/>
</dbReference>
<dbReference type="GO" id="GO:0008914">
    <property type="term" value="F:leucyl-tRNA--protein transferase activity"/>
    <property type="evidence" value="ECO:0007669"/>
    <property type="project" value="UniProtKB-UniRule"/>
</dbReference>
<dbReference type="GO" id="GO:0071596">
    <property type="term" value="P:ubiquitin-dependent protein catabolic process via the N-end rule pathway"/>
    <property type="evidence" value="ECO:0007669"/>
    <property type="project" value="InterPro"/>
</dbReference>
<dbReference type="HAMAP" id="MF_00689">
    <property type="entry name" value="Bpt"/>
    <property type="match status" value="1"/>
</dbReference>
<dbReference type="InterPro" id="IPR016181">
    <property type="entry name" value="Acyl_CoA_acyltransferase"/>
</dbReference>
<dbReference type="InterPro" id="IPR017138">
    <property type="entry name" value="Asp_Glu_LeuTrfase"/>
</dbReference>
<dbReference type="InterPro" id="IPR030700">
    <property type="entry name" value="N-end_Aminoacyl_Trfase"/>
</dbReference>
<dbReference type="InterPro" id="IPR007472">
    <property type="entry name" value="N-end_Aminoacyl_Trfase_C"/>
</dbReference>
<dbReference type="InterPro" id="IPR007471">
    <property type="entry name" value="N-end_Aminoacyl_Trfase_N"/>
</dbReference>
<dbReference type="NCBIfam" id="NF002343">
    <property type="entry name" value="PRK01305.1-4"/>
    <property type="match status" value="1"/>
</dbReference>
<dbReference type="PANTHER" id="PTHR21367">
    <property type="entry name" value="ARGININE-TRNA-PROTEIN TRANSFERASE 1"/>
    <property type="match status" value="1"/>
</dbReference>
<dbReference type="PANTHER" id="PTHR21367:SF1">
    <property type="entry name" value="ARGINYL-TRNA--PROTEIN TRANSFERASE 1"/>
    <property type="match status" value="1"/>
</dbReference>
<dbReference type="Pfam" id="PF04377">
    <property type="entry name" value="ATE_C"/>
    <property type="match status" value="1"/>
</dbReference>
<dbReference type="Pfam" id="PF04376">
    <property type="entry name" value="ATE_N"/>
    <property type="match status" value="1"/>
</dbReference>
<dbReference type="PIRSF" id="PIRSF037208">
    <property type="entry name" value="ATE_pro_prd"/>
    <property type="match status" value="1"/>
</dbReference>
<dbReference type="SUPFAM" id="SSF55729">
    <property type="entry name" value="Acyl-CoA N-acyltransferases (Nat)"/>
    <property type="match status" value="1"/>
</dbReference>
<comment type="function">
    <text evidence="1">Functions in the N-end rule pathway of protein degradation where it conjugates Leu from its aminoacyl-tRNA to the N-termini of proteins containing an N-terminal aspartate or glutamate.</text>
</comment>
<comment type="catalytic activity">
    <reaction evidence="1">
        <text>N-terminal L-glutamyl-[protein] + L-leucyl-tRNA(Leu) = N-terminal L-leucyl-L-glutamyl-[protein] + tRNA(Leu) + H(+)</text>
        <dbReference type="Rhea" id="RHEA:50412"/>
        <dbReference type="Rhea" id="RHEA-COMP:9613"/>
        <dbReference type="Rhea" id="RHEA-COMP:9622"/>
        <dbReference type="Rhea" id="RHEA-COMP:12664"/>
        <dbReference type="Rhea" id="RHEA-COMP:12668"/>
        <dbReference type="ChEBI" id="CHEBI:15378"/>
        <dbReference type="ChEBI" id="CHEBI:64721"/>
        <dbReference type="ChEBI" id="CHEBI:78442"/>
        <dbReference type="ChEBI" id="CHEBI:78494"/>
        <dbReference type="ChEBI" id="CHEBI:133041"/>
        <dbReference type="EC" id="2.3.2.29"/>
    </reaction>
</comment>
<comment type="catalytic activity">
    <reaction evidence="1">
        <text>N-terminal L-aspartyl-[protein] + L-leucyl-tRNA(Leu) = N-terminal L-leucyl-L-aspartyl-[protein] + tRNA(Leu) + H(+)</text>
        <dbReference type="Rhea" id="RHEA:50420"/>
        <dbReference type="Rhea" id="RHEA-COMP:9613"/>
        <dbReference type="Rhea" id="RHEA-COMP:9622"/>
        <dbReference type="Rhea" id="RHEA-COMP:12669"/>
        <dbReference type="Rhea" id="RHEA-COMP:12674"/>
        <dbReference type="ChEBI" id="CHEBI:15378"/>
        <dbReference type="ChEBI" id="CHEBI:64720"/>
        <dbReference type="ChEBI" id="CHEBI:78442"/>
        <dbReference type="ChEBI" id="CHEBI:78494"/>
        <dbReference type="ChEBI" id="CHEBI:133042"/>
        <dbReference type="EC" id="2.3.2.29"/>
    </reaction>
</comment>
<comment type="subcellular location">
    <subcellularLocation>
        <location evidence="1">Cytoplasm</location>
    </subcellularLocation>
</comment>
<comment type="similarity">
    <text evidence="1">Belongs to the R-transferase family. Bpt subfamily.</text>
</comment>
<keyword id="KW-0012">Acyltransferase</keyword>
<keyword id="KW-0963">Cytoplasm</keyword>
<keyword id="KW-1185">Reference proteome</keyword>
<keyword id="KW-0808">Transferase</keyword>
<proteinExistence type="inferred from homology"/>
<protein>
    <recommendedName>
        <fullName evidence="1">Aspartate/glutamate leucyltransferase</fullName>
        <ecNumber evidence="1">2.3.2.29</ecNumber>
    </recommendedName>
</protein>